<comment type="function">
    <text evidence="1">The BBSome complex is thought to function as a coat complex required for sorting of specific membrane proteins to the primary cilia. The BBSome complex is required for ciliogenesis but is dispensable for centriolar satellite function. This ciliogenic function is mediated in part by the Rab8 GDP/GTP exchange factor, which localizes to the basal body and contacts the BBSome. Rab8(GTP) enters the primary cilium and promotes extension of the ciliary membrane. Firstly the BBSome associates with the ciliary membrane and binds to RAB3IP/Rabin8, the guanosyl exchange factor (GEF) for Rab8 and then the Rab8-GTP localizes to the cilium and promotes docking and fusion of carrier vesicles to the base of the ciliary membrane. The BBSome complex, together with the LTZL1, controls SMO ciliary trafficking and contributes to the sonic hedgehog (SHH) pathway regulation. Required for proper BBSome complex assembly and its ciliary localization (By similarity).</text>
</comment>
<comment type="subunit">
    <text evidence="2">Part of BBSome complex, that contains BBS1, BBS2, BBS4, BBS5, BBS7, BBS8/TTC8, BBS9 and BBIP10. Interacts (via C-terminus) with BBS7. Interacts (via coiled coil domain) with MKKS. Interacts with CCDC28B (By similarity). Interacts with DLEC1 (By similarity).</text>
</comment>
<comment type="subcellular location">
    <subcellularLocation>
        <location evidence="1">Cell projection</location>
        <location evidence="1">Cilium membrane</location>
    </subcellularLocation>
    <subcellularLocation>
        <location evidence="1">Cytoplasm</location>
    </subcellularLocation>
    <subcellularLocation>
        <location evidence="1">Cytoplasm</location>
        <location evidence="1">Cytoskeleton</location>
        <location evidence="1">Microtubule organizing center</location>
        <location evidence="1">Centrosome</location>
        <location evidence="1">Centriolar satellite</location>
    </subcellularLocation>
</comment>
<protein>
    <recommendedName>
        <fullName evidence="4">BBSome complex member BBS2</fullName>
    </recommendedName>
    <alternativeName>
        <fullName>Bardet-Biedl syndrome 2 protein homolog</fullName>
    </alternativeName>
</protein>
<organism>
    <name type="scientific">Rattus norvegicus</name>
    <name type="common">Rat</name>
    <dbReference type="NCBI Taxonomy" id="10116"/>
    <lineage>
        <taxon>Eukaryota</taxon>
        <taxon>Metazoa</taxon>
        <taxon>Chordata</taxon>
        <taxon>Craniata</taxon>
        <taxon>Vertebrata</taxon>
        <taxon>Euteleostomi</taxon>
        <taxon>Mammalia</taxon>
        <taxon>Eutheria</taxon>
        <taxon>Euarchontoglires</taxon>
        <taxon>Glires</taxon>
        <taxon>Rodentia</taxon>
        <taxon>Myomorpha</taxon>
        <taxon>Muroidea</taxon>
        <taxon>Muridae</taxon>
        <taxon>Murinae</taxon>
        <taxon>Rattus</taxon>
    </lineage>
</organism>
<evidence type="ECO:0000250" key="1"/>
<evidence type="ECO:0000250" key="2">
    <source>
        <dbReference type="UniProtKB" id="Q9BXC9"/>
    </source>
</evidence>
<evidence type="ECO:0000255" key="3"/>
<evidence type="ECO:0000305" key="4"/>
<reference key="1">
    <citation type="journal article" date="2001" name="Hum. Mol. Genet.">
        <title>Positional cloning of a novel gene on chromosome 16q causing Bardet-Biedl syndrome (BBS2).</title>
        <authorList>
            <person name="Nishimura D.Y."/>
            <person name="Searby C.C."/>
            <person name="Carmi R."/>
            <person name="Elbedour K."/>
            <person name="Van Maldergem L."/>
            <person name="Fulton A.B."/>
            <person name="Lam B.L."/>
            <person name="Powell B.R."/>
            <person name="Swiderski R.E."/>
            <person name="Bugge K.E."/>
            <person name="Haider N.B."/>
            <person name="Kwitek-Black A.E."/>
            <person name="Ying L."/>
            <person name="Duhl D.M."/>
            <person name="Gorman S.M."/>
            <person name="Heon E."/>
            <person name="Iannaccone A."/>
            <person name="Bonneau D."/>
            <person name="Biesecker L.G."/>
            <person name="Jacobson S.G."/>
            <person name="Stone E.M."/>
            <person name="Sheffield V.C."/>
        </authorList>
    </citation>
    <scope>NUCLEOTIDE SEQUENCE [MRNA]</scope>
    <source>
        <strain>Sprague-Dawley</strain>
    </source>
</reference>
<gene>
    <name type="primary">Bbs2</name>
</gene>
<name>BBS2_RAT</name>
<dbReference type="EMBL" id="AF342738">
    <property type="protein sequence ID" value="AAK28554.1"/>
    <property type="molecule type" value="mRNA"/>
</dbReference>
<dbReference type="RefSeq" id="NP_446070.1">
    <property type="nucleotide sequence ID" value="NM_053618.1"/>
</dbReference>
<dbReference type="SMR" id="Q99MH9"/>
<dbReference type="FunCoup" id="Q99MH9">
    <property type="interactions" value="1779"/>
</dbReference>
<dbReference type="STRING" id="10116.ENSRNOP00000026076"/>
<dbReference type="GlyGen" id="Q99MH9">
    <property type="glycosylation" value="1 site"/>
</dbReference>
<dbReference type="iPTMnet" id="Q99MH9"/>
<dbReference type="PhosphoSitePlus" id="Q99MH9"/>
<dbReference type="PaxDb" id="10116-ENSRNOP00000026076"/>
<dbReference type="Ensembl" id="ENSRNOT00000026076.4">
    <property type="protein sequence ID" value="ENSRNOP00000026076.2"/>
    <property type="gene ID" value="ENSRNOG00000019020.4"/>
</dbReference>
<dbReference type="GeneID" id="113948"/>
<dbReference type="KEGG" id="rno:113948"/>
<dbReference type="UCSC" id="RGD:71091">
    <property type="organism name" value="rat"/>
</dbReference>
<dbReference type="AGR" id="RGD:71091"/>
<dbReference type="CTD" id="583"/>
<dbReference type="RGD" id="71091">
    <property type="gene designation" value="Bbs2"/>
</dbReference>
<dbReference type="eggNOG" id="ENOG502QPWU">
    <property type="taxonomic scope" value="Eukaryota"/>
</dbReference>
<dbReference type="GeneTree" id="ENSGT00390000017113"/>
<dbReference type="HOGENOM" id="CLU_023359_0_0_1"/>
<dbReference type="InParanoid" id="Q99MH9"/>
<dbReference type="OMA" id="MSDGANC"/>
<dbReference type="PhylomeDB" id="Q99MH9"/>
<dbReference type="TreeFam" id="TF313236"/>
<dbReference type="Reactome" id="R-RNO-5620922">
    <property type="pathway name" value="BBSome-mediated cargo-targeting to cilium"/>
</dbReference>
<dbReference type="PRO" id="PR:Q99MH9"/>
<dbReference type="Proteomes" id="UP000002494">
    <property type="component" value="Chromosome 19"/>
</dbReference>
<dbReference type="Bgee" id="ENSRNOG00000019020">
    <property type="expression patterns" value="Expressed in testis and 20 other cell types or tissues"/>
</dbReference>
<dbReference type="GO" id="GO:0034464">
    <property type="term" value="C:BBSome"/>
    <property type="evidence" value="ECO:0000266"/>
    <property type="project" value="RGD"/>
</dbReference>
<dbReference type="GO" id="GO:0034451">
    <property type="term" value="C:centriolar satellite"/>
    <property type="evidence" value="ECO:0007669"/>
    <property type="project" value="UniProtKB-SubCell"/>
</dbReference>
<dbReference type="GO" id="GO:0036064">
    <property type="term" value="C:ciliary basal body"/>
    <property type="evidence" value="ECO:0000266"/>
    <property type="project" value="RGD"/>
</dbReference>
<dbReference type="GO" id="GO:0060170">
    <property type="term" value="C:ciliary membrane"/>
    <property type="evidence" value="ECO:0000266"/>
    <property type="project" value="RGD"/>
</dbReference>
<dbReference type="GO" id="GO:0005737">
    <property type="term" value="C:cytoplasm"/>
    <property type="evidence" value="ECO:0007669"/>
    <property type="project" value="UniProtKB-SubCell"/>
</dbReference>
<dbReference type="GO" id="GO:0016020">
    <property type="term" value="C:membrane"/>
    <property type="evidence" value="ECO:0000266"/>
    <property type="project" value="RGD"/>
</dbReference>
<dbReference type="GO" id="GO:0005902">
    <property type="term" value="C:microvillus"/>
    <property type="evidence" value="ECO:0000266"/>
    <property type="project" value="RGD"/>
</dbReference>
<dbReference type="GO" id="GO:0031514">
    <property type="term" value="C:motile cilium"/>
    <property type="evidence" value="ECO:0000266"/>
    <property type="project" value="RGD"/>
</dbReference>
<dbReference type="GO" id="GO:0043005">
    <property type="term" value="C:neuron projection"/>
    <property type="evidence" value="ECO:0000266"/>
    <property type="project" value="RGD"/>
</dbReference>
<dbReference type="GO" id="GO:0032420">
    <property type="term" value="C:stereocilium"/>
    <property type="evidence" value="ECO:0000266"/>
    <property type="project" value="RGD"/>
</dbReference>
<dbReference type="GO" id="GO:0061629">
    <property type="term" value="F:RNA polymerase II-specific DNA-binding transcription factor binding"/>
    <property type="evidence" value="ECO:0000266"/>
    <property type="project" value="RGD"/>
</dbReference>
<dbReference type="GO" id="GO:0030534">
    <property type="term" value="P:adult behavior"/>
    <property type="evidence" value="ECO:0000266"/>
    <property type="project" value="RGD"/>
</dbReference>
<dbReference type="GO" id="GO:0014824">
    <property type="term" value="P:artery smooth muscle contraction"/>
    <property type="evidence" value="ECO:0000266"/>
    <property type="project" value="RGD"/>
</dbReference>
<dbReference type="GO" id="GO:0048854">
    <property type="term" value="P:brain morphogenesis"/>
    <property type="evidence" value="ECO:0000266"/>
    <property type="project" value="RGD"/>
</dbReference>
<dbReference type="GO" id="GO:0051216">
    <property type="term" value="P:cartilage development"/>
    <property type="evidence" value="ECO:0000266"/>
    <property type="project" value="RGD"/>
</dbReference>
<dbReference type="GO" id="GO:0021987">
    <property type="term" value="P:cerebral cortex development"/>
    <property type="evidence" value="ECO:0000266"/>
    <property type="project" value="RGD"/>
</dbReference>
<dbReference type="GO" id="GO:0060271">
    <property type="term" value="P:cilium assembly"/>
    <property type="evidence" value="ECO:0000266"/>
    <property type="project" value="RGD"/>
</dbReference>
<dbReference type="GO" id="GO:0045444">
    <property type="term" value="P:fat cell differentiation"/>
    <property type="evidence" value="ECO:0000266"/>
    <property type="project" value="RGD"/>
</dbReference>
<dbReference type="GO" id="GO:0010467">
    <property type="term" value="P:gene expression"/>
    <property type="evidence" value="ECO:0000266"/>
    <property type="project" value="RGD"/>
</dbReference>
<dbReference type="GO" id="GO:0043001">
    <property type="term" value="P:Golgi to plasma membrane protein transport"/>
    <property type="evidence" value="ECO:0000266"/>
    <property type="project" value="RGD"/>
</dbReference>
<dbReference type="GO" id="GO:0021766">
    <property type="term" value="P:hippocampus development"/>
    <property type="evidence" value="ECO:0000266"/>
    <property type="project" value="RGD"/>
</dbReference>
<dbReference type="GO" id="GO:0033210">
    <property type="term" value="P:leptin-mediated signaling pathway"/>
    <property type="evidence" value="ECO:0000266"/>
    <property type="project" value="RGD"/>
</dbReference>
<dbReference type="GO" id="GO:0038108">
    <property type="term" value="P:negative regulation of appetite by leptin-mediated signaling pathway"/>
    <property type="evidence" value="ECO:0000266"/>
    <property type="project" value="RGD"/>
</dbReference>
<dbReference type="GO" id="GO:0010629">
    <property type="term" value="P:negative regulation of gene expression"/>
    <property type="evidence" value="ECO:0000266"/>
    <property type="project" value="RGD"/>
</dbReference>
<dbReference type="GO" id="GO:0040015">
    <property type="term" value="P:negative regulation of multicellular organism growth"/>
    <property type="evidence" value="ECO:0000266"/>
    <property type="project" value="RGD"/>
</dbReference>
<dbReference type="GO" id="GO:1905515">
    <property type="term" value="P:non-motile cilium assembly"/>
    <property type="evidence" value="ECO:0000266"/>
    <property type="project" value="RGD"/>
</dbReference>
<dbReference type="GO" id="GO:0045494">
    <property type="term" value="P:photoreceptor cell maintenance"/>
    <property type="evidence" value="ECO:0000266"/>
    <property type="project" value="RGD"/>
</dbReference>
<dbReference type="GO" id="GO:0040018">
    <property type="term" value="P:positive regulation of multicellular organism growth"/>
    <property type="evidence" value="ECO:0000266"/>
    <property type="project" value="RGD"/>
</dbReference>
<dbReference type="GO" id="GO:0008104">
    <property type="term" value="P:protein localization"/>
    <property type="evidence" value="ECO:0000266"/>
    <property type="project" value="RGD"/>
</dbReference>
<dbReference type="GO" id="GO:0033365">
    <property type="term" value="P:protein localization to organelle"/>
    <property type="evidence" value="ECO:0000266"/>
    <property type="project" value="RGD"/>
</dbReference>
<dbReference type="GO" id="GO:0060296">
    <property type="term" value="P:regulation of cilium beat frequency involved in ciliary motility"/>
    <property type="evidence" value="ECO:0000266"/>
    <property type="project" value="RGD"/>
</dbReference>
<dbReference type="GO" id="GO:0044321">
    <property type="term" value="P:response to leptin"/>
    <property type="evidence" value="ECO:0000266"/>
    <property type="project" value="RGD"/>
</dbReference>
<dbReference type="GO" id="GO:0007288">
    <property type="term" value="P:sperm axoneme assembly"/>
    <property type="evidence" value="ECO:0000266"/>
    <property type="project" value="RGD"/>
</dbReference>
<dbReference type="GO" id="GO:0021756">
    <property type="term" value="P:striatum development"/>
    <property type="evidence" value="ECO:0000266"/>
    <property type="project" value="RGD"/>
</dbReference>
<dbReference type="GO" id="GO:0042311">
    <property type="term" value="P:vasodilation"/>
    <property type="evidence" value="ECO:0000266"/>
    <property type="project" value="RGD"/>
</dbReference>
<dbReference type="GO" id="GO:0007601">
    <property type="term" value="P:visual perception"/>
    <property type="evidence" value="ECO:0000250"/>
    <property type="project" value="UniProtKB"/>
</dbReference>
<dbReference type="FunFam" id="2.130.10.10:FF:000967">
    <property type="entry name" value="Bardet-Biedl syndrome 2 protein homolog"/>
    <property type="match status" value="1"/>
</dbReference>
<dbReference type="InterPro" id="IPR016616">
    <property type="entry name" value="Bardet-Biedl_syndrome_2_prot"/>
</dbReference>
<dbReference type="InterPro" id="IPR055381">
    <property type="entry name" value="BBS2_CtH_dom"/>
</dbReference>
<dbReference type="InterPro" id="IPR029333">
    <property type="entry name" value="BBS2_GAE_dom"/>
</dbReference>
<dbReference type="InterPro" id="IPR055380">
    <property type="entry name" value="BBS2_hp_dom"/>
</dbReference>
<dbReference type="InterPro" id="IPR029429">
    <property type="entry name" value="BBS2_Mid"/>
</dbReference>
<dbReference type="InterPro" id="IPR029430">
    <property type="entry name" value="BBS2_N"/>
</dbReference>
<dbReference type="InterPro" id="IPR055379">
    <property type="entry name" value="BBS2_pf_dom"/>
</dbReference>
<dbReference type="InterPro" id="IPR036322">
    <property type="entry name" value="WD40_repeat_dom_sf"/>
</dbReference>
<dbReference type="PANTHER" id="PTHR32465">
    <property type="entry name" value="BARDET-BIEDL SYNDROME 2 PROTEIN"/>
    <property type="match status" value="1"/>
</dbReference>
<dbReference type="PANTHER" id="PTHR32465:SF0">
    <property type="entry name" value="BARDET-BIEDL SYNDROME 2 PROTEIN"/>
    <property type="match status" value="1"/>
</dbReference>
<dbReference type="Pfam" id="PF23351">
    <property type="entry name" value="BBS2_CtH"/>
    <property type="match status" value="1"/>
</dbReference>
<dbReference type="Pfam" id="PF14782">
    <property type="entry name" value="BBS2_GAE"/>
    <property type="match status" value="1"/>
</dbReference>
<dbReference type="Pfam" id="PF23353">
    <property type="entry name" value="BBS2_hp"/>
    <property type="match status" value="1"/>
</dbReference>
<dbReference type="Pfam" id="PF14783">
    <property type="entry name" value="BBS2_Mid"/>
    <property type="match status" value="1"/>
</dbReference>
<dbReference type="Pfam" id="PF14781">
    <property type="entry name" value="BBS2_N"/>
    <property type="match status" value="1"/>
</dbReference>
<dbReference type="Pfam" id="PF23350">
    <property type="entry name" value="BBS2_pf"/>
    <property type="match status" value="1"/>
</dbReference>
<dbReference type="PIRSF" id="PIRSF013684">
    <property type="entry name" value="BBS2"/>
    <property type="match status" value="1"/>
</dbReference>
<dbReference type="SUPFAM" id="SSF50978">
    <property type="entry name" value="WD40 repeat-like"/>
    <property type="match status" value="1"/>
</dbReference>
<keyword id="KW-1003">Cell membrane</keyword>
<keyword id="KW-0966">Cell projection</keyword>
<keyword id="KW-0969">Cilium</keyword>
<keyword id="KW-0970">Cilium biogenesis/degradation</keyword>
<keyword id="KW-0175">Coiled coil</keyword>
<keyword id="KW-0963">Cytoplasm</keyword>
<keyword id="KW-0206">Cytoskeleton</keyword>
<keyword id="KW-0472">Membrane</keyword>
<keyword id="KW-0653">Protein transport</keyword>
<keyword id="KW-1185">Reference proteome</keyword>
<keyword id="KW-0813">Transport</keyword>
<proteinExistence type="evidence at transcript level"/>
<accession>Q99MH9</accession>
<feature type="chain" id="PRO_0000064845" description="BBSome complex member BBS2">
    <location>
        <begin position="1"/>
        <end position="721"/>
    </location>
</feature>
<feature type="coiled-coil region" evidence="3">
    <location>
        <begin position="325"/>
        <end position="369"/>
    </location>
</feature>
<sequence>MLLPVFTLKLRHKISPRMVAIGRYDGTHPCLAAATQAGKVFIHNPHMRSQHFSTSRVFQSPLESDVSLLNINQTVSCLGAGVLNPELGYDTLLVGTQTSLLAYDIYNNSDLFYREVADGANALVLGTLGDIAPPLAIIGGNCALQGFDHEGNDLFWTVTGDNVHSLALCDFDGDGKSELLVGSEDFDIRVFKEDEIVAEMTETEIVTSLCPMYGSRFGYALSNGTVGVYDKTARYWRIKSKNHAMSIHAFDINSDGVCELITGWSNGKVDARSDRTGEVIFKDNFSSAVAGVVEGDYRMDGHVQLICCSVDGEIRGYLPGTAEMKGNLLDTSVEQGLIRELSQKKQNLLLELRNYEENTKAELSSPLNEADGQKGIIPANTKLHTALSVNLGNDAQDAHAELRISTSNDTIIRAVLIFAEGIFAGESHVVHPSTHNLSSSIRVPITPPKDVPVDLHLKTFVGYRSSTQFHVFELIRQLPRFTMYALTSPDAASEPVSFVNFIVVERAQRMVTWLNQNFLLPEDSNIQNAPFHVCFTSLRNGGQLYIKMKPSGEITVNTDDIDLAGDIIQSMASFFAIEDLQVEADFPVYFEELRKVLLKVDEYHSVHQKLSANMADNSNLIRSLLVRAEDARLMRDMKTMKTRYMELYDLNKDLLNGYKIRCNNHTELLGNLKAVNQAIQRAGRLRVGKPKNQVISACRDAIRSNNINTLFRIMRVGTAPS</sequence>